<protein>
    <recommendedName>
        <fullName evidence="8">Protein TASOR</fullName>
    </recommendedName>
    <alternativeName>
        <fullName evidence="1">Transgene activation suppressor protein</fullName>
    </alternativeName>
</protein>
<feature type="initiator methionine" description="Removed" evidence="1">
    <location>
        <position position="1"/>
    </location>
</feature>
<feature type="chain" id="PRO_0000295729" description="Protein TASOR">
    <location>
        <begin position="2"/>
        <end position="1610"/>
    </location>
</feature>
<feature type="region of interest" description="Disordered" evidence="2">
    <location>
        <begin position="1"/>
        <end position="96"/>
    </location>
</feature>
<feature type="region of interest" description="Disordered" evidence="2">
    <location>
        <begin position="631"/>
        <end position="671"/>
    </location>
</feature>
<feature type="region of interest" description="Disordered" evidence="2">
    <location>
        <begin position="687"/>
        <end position="710"/>
    </location>
</feature>
<feature type="region of interest" description="Disordered" evidence="2">
    <location>
        <begin position="915"/>
        <end position="941"/>
    </location>
</feature>
<feature type="compositionally biased region" description="Gly residues" evidence="2">
    <location>
        <begin position="41"/>
        <end position="51"/>
    </location>
</feature>
<feature type="compositionally biased region" description="Low complexity" evidence="2">
    <location>
        <begin position="52"/>
        <end position="61"/>
    </location>
</feature>
<feature type="compositionally biased region" description="Basic and acidic residues" evidence="2">
    <location>
        <begin position="652"/>
        <end position="671"/>
    </location>
</feature>
<feature type="compositionally biased region" description="Basic and acidic residues" evidence="2">
    <location>
        <begin position="697"/>
        <end position="710"/>
    </location>
</feature>
<feature type="compositionally biased region" description="Basic and acidic residues" evidence="2">
    <location>
        <begin position="923"/>
        <end position="934"/>
    </location>
</feature>
<feature type="modified residue" description="N-acetylalanine" evidence="1">
    <location>
        <position position="2"/>
    </location>
</feature>
<feature type="modified residue" description="Phosphoserine" evidence="1">
    <location>
        <position position="339"/>
    </location>
</feature>
<feature type="modified residue" description="Phosphoserine" evidence="10">
    <location>
        <position position="628"/>
    </location>
</feature>
<feature type="modified residue" description="Phosphoserine" evidence="10">
    <location>
        <position position="631"/>
    </location>
</feature>
<feature type="modified residue" description="Phosphoserine" evidence="1">
    <location>
        <position position="668"/>
    </location>
</feature>
<feature type="modified residue" description="Phosphoserine" evidence="1">
    <location>
        <position position="793"/>
    </location>
</feature>
<feature type="modified residue" description="Phosphoserine" evidence="10">
    <location>
        <position position="836"/>
    </location>
</feature>
<feature type="modified residue" description="Phosphoserine" evidence="10">
    <location>
        <position position="921"/>
    </location>
</feature>
<feature type="modified residue" description="Phosphothreonine" evidence="1">
    <location>
        <position position="1004"/>
    </location>
</feature>
<feature type="modified residue" description="Phosphoserine" evidence="1">
    <location>
        <position position="1059"/>
    </location>
</feature>
<feature type="modified residue" description="Phosphoserine" evidence="1">
    <location>
        <position position="1508"/>
    </location>
</feature>
<feature type="cross-link" description="Glycyl lysine isopeptide (Lys-Gly) (interchain with G-Cter in SUMO2)" evidence="1">
    <location>
        <position position="581"/>
    </location>
</feature>
<feature type="cross-link" description="Glycyl lysine isopeptide (Lys-Gly) (interchain with G-Cter in SUMO2)" evidence="1">
    <location>
        <position position="816"/>
    </location>
</feature>
<feature type="cross-link" description="Glycyl lysine isopeptide (Lys-Gly) (interchain with G-Cter in SUMO2)" evidence="1">
    <location>
        <position position="825"/>
    </location>
</feature>
<feature type="cross-link" description="Glycyl lysine isopeptide (Lys-Gly) (interchain with G-Cter in SUMO2)" evidence="1">
    <location>
        <position position="866"/>
    </location>
</feature>
<feature type="splice variant" id="VSP_042114" description="In isoform 2." evidence="7">
    <location>
        <begin position="857"/>
        <end position="867"/>
    </location>
</feature>
<feature type="splice variant" id="VSP_042115" description="In isoform 2." evidence="7">
    <original>P</original>
    <variation>PGMKSPGEQLVCLPPVEAFPNDPRVINRERSCDYQFPSSPST</variation>
    <location>
        <position position="935"/>
    </location>
</feature>
<feature type="splice variant" id="VSP_042116" description="In isoform 2." evidence="7">
    <original>ALLENDEKDEEDMSLDSG</original>
    <variation>DAVLTLTPLELGVGISQH</variation>
    <location>
        <begin position="1451"/>
        <end position="1468"/>
    </location>
</feature>
<feature type="splice variant" id="VSP_042117" description="In isoform 2." evidence="7">
    <location>
        <begin position="1469"/>
        <end position="1610"/>
    </location>
</feature>
<feature type="mutagenesis site" description="In MommeD6; severe developmental delay leading to lethality before gastrulation. Mutants exhibit impaired primitive streak elongation, delayed epithelial-to-mesenchymal transition during gastrulation and an increase in p53/TP53-driven apoptosis. Epiblasts show an increased expression of p53 pathway genes as well as several pluripotency-associated long non-coding RNAs." evidence="3">
    <original>L</original>
    <variation>P</variation>
    <location>
        <position position="130"/>
    </location>
</feature>
<feature type="modified residue" description="Phosphoserine" evidence="10">
    <location sequence="Q69ZR9-2">
        <position position="928"/>
    </location>
</feature>
<comment type="function">
    <text evidence="1 3 4 5">Component of the HUSH complex, a multiprotein complex that mediates epigenetic repression. The HUSH complex is recruited to genomic loci rich in H3K9me3 and is required to maintain transcriptional silencing by promoting recruitment of SETDB1, a histone methyltransferase that mediates further deposition of H3K9me3, as well as MORC2. Also represses L1 retrotransposons in collaboration with MORC2 and, probably, SETDB1, the silencing is dependent of repressive epigenetic modifications, such as H3K9me3 mark. Silencing events often occur within introns of transcriptionally active genes, and lead to the down-regulation of host gene expression. The HUSH complex is also involved in the silencing of unintegrated retroviral DNA by being recruited by ZNF638: some part of the retroviral DNA formed immediately after infection remains unintegrated in the host genome and is transcriptionally repressed (By similarity). Plays a crucial role in early embryonic development (PubMed:24781204, PubMed:28839193, PubMed:31112734). Involved in the organization of spindle poles and spindle apparatus assembly during zygotic division (PubMed:31112734). Plays an important role in maintaining epiblast fitness or potency (PubMed:28839193).</text>
</comment>
<comment type="subunit">
    <text evidence="1 5">Component of the HUSH complex; at least composed of TASOR, PPHLN1 and MPHOSPH8 (By similarity). Interacts with MORC2; the interaction associateS MORC2 with the HUSH complex which recruits MORC2 to heterochromatic loci (By similarity). Interacts with ZNF638; leading to recruitment of the HUSH complex to unintegrated retroviral DNA (By similarity). Interacts with INPP5A, EML1, SV1L, GPSM2, ITGB3BP, CNTN1, ETFA, PSMD8, S100A10, MPHOSPH8, TMEM100, ALB, PARPBP, HCFC2, NCBP1 and SETDB1 (PubMed:31112734).</text>
</comment>
<comment type="subcellular location">
    <subcellularLocation>
        <location evidence="3">Nucleus</location>
    </subcellularLocation>
    <subcellularLocation>
        <location evidence="1">Chromosome</location>
    </subcellularLocation>
    <text evidence="1">Localizes to chromatin.</text>
</comment>
<comment type="alternative products">
    <event type="alternative splicing"/>
    <isoform>
        <id>Q69ZR9-1</id>
        <name>1</name>
        <sequence type="displayed"/>
    </isoform>
    <isoform>
        <id>Q69ZR9-2</id>
        <name>2</name>
        <sequence type="described" ref="VSP_042114 VSP_042115 VSP_042116 VSP_042117"/>
    </isoform>
</comment>
<comment type="tissue specificity">
    <text evidence="3 5">Present in skin, brain and testis (at protein level) (PubMed:24781204). Ubiquitously expressed at low levels in the majority of the organs, expressed at higher levels in kidneys, spleen, thymus, seminal vesicles, uterus, and ovaries and its expression is almost six times higher in male tissues than in females (PubMed:31112734). Highly expressed in seminiferous tubules with a strong signal in Sertoli cells, spermatogonia, and spermatocytes (PubMed:31112734).</text>
</comment>
<comment type="developmental stage">
    <text evidence="4">Expressed in the epiblast at 5.5 dpc, expression extends into the extraembryonic ectoderm at 6.5 dpc, and at 7.5 dpc expressed in embryonic ectoderm, allantois, amnion and chorion. From 8.5 to 9.5 dpc, ubiquitously expressed in the developing embryo.</text>
</comment>
<comment type="disruption phenotype">
    <text evidence="3 4">Embryonic lethality with robust developmentally delayed phenotype observed at 8.5 dpc, progressing through 9.5 dpc with full lethality by 12.5 dpc (PubMed:24781204, PubMed:28839193). RNAi-mediated knockdown in zygotes results in formation of multipolar spindles and increased ratio of arrested or incorrectly developed embryos (PubMed:28839193).</text>
</comment>
<comment type="similarity">
    <text evidence="8">Belongs to the TASOR family.</text>
</comment>
<keyword id="KW-0007">Acetylation</keyword>
<keyword id="KW-0025">Alternative splicing</keyword>
<keyword id="KW-0158">Chromosome</keyword>
<keyword id="KW-1017">Isopeptide bond</keyword>
<keyword id="KW-0539">Nucleus</keyword>
<keyword id="KW-0597">Phosphoprotein</keyword>
<keyword id="KW-1185">Reference proteome</keyword>
<keyword id="KW-0678">Repressor</keyword>
<keyword id="KW-0804">Transcription</keyword>
<keyword id="KW-0805">Transcription regulation</keyword>
<keyword id="KW-0832">Ubl conjugation</keyword>
<gene>
    <name evidence="1" type="primary">Tasor</name>
    <name type="synonym">D14Abb1e</name>
    <name evidence="9" type="synonym">Fam208a</name>
    <name evidence="6" type="synonym">Kiaa1105</name>
</gene>
<evidence type="ECO:0000250" key="1">
    <source>
        <dbReference type="UniProtKB" id="Q9UK61"/>
    </source>
</evidence>
<evidence type="ECO:0000256" key="2">
    <source>
        <dbReference type="SAM" id="MobiDB-lite"/>
    </source>
</evidence>
<evidence type="ECO:0000269" key="3">
    <source>
    </source>
</evidence>
<evidence type="ECO:0000269" key="4">
    <source>
    </source>
</evidence>
<evidence type="ECO:0000269" key="5">
    <source>
    </source>
</evidence>
<evidence type="ECO:0000303" key="6">
    <source>
    </source>
</evidence>
<evidence type="ECO:0000303" key="7">
    <source>
    </source>
</evidence>
<evidence type="ECO:0000305" key="8"/>
<evidence type="ECO:0000312" key="9">
    <source>
        <dbReference type="MGI" id="MGI:1921694"/>
    </source>
</evidence>
<evidence type="ECO:0007744" key="10">
    <source>
    </source>
</evidence>
<name>TASOR_MOUSE</name>
<proteinExistence type="evidence at protein level"/>
<accession>Q69ZR9</accession>
<accession>E9PUH2</accession>
<accession>Q9CUD3</accession>
<organism>
    <name type="scientific">Mus musculus</name>
    <name type="common">Mouse</name>
    <dbReference type="NCBI Taxonomy" id="10090"/>
    <lineage>
        <taxon>Eukaryota</taxon>
        <taxon>Metazoa</taxon>
        <taxon>Chordata</taxon>
        <taxon>Craniata</taxon>
        <taxon>Vertebrata</taxon>
        <taxon>Euteleostomi</taxon>
        <taxon>Mammalia</taxon>
        <taxon>Eutheria</taxon>
        <taxon>Euarchontoglires</taxon>
        <taxon>Glires</taxon>
        <taxon>Rodentia</taxon>
        <taxon>Myomorpha</taxon>
        <taxon>Muroidea</taxon>
        <taxon>Muridae</taxon>
        <taxon>Murinae</taxon>
        <taxon>Mus</taxon>
        <taxon>Mus</taxon>
    </lineage>
</organism>
<sequence>MATAAETEAPSTDASWKSRGGGGGDDGMKPALPELESSLQNGGGDGGGGAGPEETAAAEAARSYGHEQPQQTSEAAAAALPKGAEEPERPFRRSFQIPRKSREKKALFQPLTPGSREFEDVLNILHSSYLEPSSVTYFNYRRACLIHNELLEKEFTEKRRELKFDGRLDKELSESYAFLMVDRYQVQSICEKGLQVGQSKITVLGSPSMGIYLCRYADLLQANPLEAGAVGDVVIFKIMKGKIKSIYDPLSVKSLESMLSKNALDPTPKHECHVSKNASRITSLLAYRAYELTQYYFYEYGFDEVRRRPRHVCPYAVVSFTYKDDVQTPKFLSPLRSNSFNADRNIDKFNYTLWKGQLLNKGKLLCYISLRSANRAFLPVKLPEKLDVETVMSIDCLKQKIPPSFFYKDTYVGPNEVLKNGMYCSLYEVVEKTRIGSNMECLLQKLEKEKLVLVKPLGDRGYLFLLSPFQMVSPYEHQTVKSRILHALFLFQEPRCLIITQKGIMNTTPLEKPENLADILKITQFLQFSLIQCRKEFKTINTINFHSVVEKYVSEFFKRGFGSGKREFFMFSYDSRLDDRKFLYSAPRNKSHIDDCLHTYIYQPEMYQLSIFKLKELFEENWRRQQFSPLSDYEGQEEELNGSKMKFGKRNNSRDETTEPEQQKSSHSLDYDKDRVKELINLIQCTKKNVGGDPDPEDTKSKNVLKRKLEDLPENMRKFAKTSNSTESCHLYEESPQSIGLLGQDPNLRVQQEDSGNTGDIHKLYNWLSEALANARHSDGFLTETVNKALGLSSSGAYEELKQKCDYELNSTLDKKESEQPACTKIENVHFKDAQSPLLEVDAASVKYPPLLSSSEVGINHKLHCKEDPNLINVNNFEGCSLCPTVSIEHGFLRQHSKSNDDEETEIHWKLIPITGGNAGSPEDQHGKHGEKQTPDTLKGTTEEDTVTAGQAMAVEEQCVPAAELPRVSEITENTVLGEFHLFSRKVEEILKEKNVSYVSAISTPIFSAQEKMNRLSEFIHSNTSKAGVEEFVDGLHEKLNTVVITASAKGVSLPPAVSANHSHAAAALASLGRRVVSISSSDFSAKELFEPLCSEHLKDNNSNEQYSSSVEVEMNRPHHCKELMLTSDHTVPGDTVLEPTEKEITKSPSDITISAQPALSNFISQLEPEVFNSLVKIMKDVQKNTVKFYIHEEEESVLCKEIKEYLTKLGNTECHPDQFLERRSNLDKLLIIIQNEDIAGFIHKVPGLVTLKKLPCVSFAGVDSLDDVKNHTYNELFVSGGFIVSDESILNLEVVTIESLKIFLTFLEELSTPEGKWQWKIHCKFQKKLKELGRMNTKALSLLTLLNVYQKKHLVEILSYHSCDSQTRNAPEMDCLIRLQAQNIQQRHIVFLTEKNIKMVSSYTDNGIVVATTEDFMQNFTSLVGYHNSVTEESLPPLLGANENLESQSALLENDEKDEEDMSLDSGDEISHIEVFSNVHSEILAGETKGSSGTDQKKNIQIELQSSLDVQNSLLEDKTYLIDCEASAPIDRVCSEGESSNSAEQDAYSDFQADQNQLQMSHQCSHFNVLTHQTFLGTPYALSSTRSQENENYFLSAYKNSGTEKSPLS</sequence>
<reference key="1">
    <citation type="journal article" date="2009" name="PLoS Biol.">
        <title>Lineage-specific biology revealed by a finished genome assembly of the mouse.</title>
        <authorList>
            <person name="Church D.M."/>
            <person name="Goodstadt L."/>
            <person name="Hillier L.W."/>
            <person name="Zody M.C."/>
            <person name="Goldstein S."/>
            <person name="She X."/>
            <person name="Bult C.J."/>
            <person name="Agarwala R."/>
            <person name="Cherry J.L."/>
            <person name="DiCuccio M."/>
            <person name="Hlavina W."/>
            <person name="Kapustin Y."/>
            <person name="Meric P."/>
            <person name="Maglott D."/>
            <person name="Birtle Z."/>
            <person name="Marques A.C."/>
            <person name="Graves T."/>
            <person name="Zhou S."/>
            <person name="Teague B."/>
            <person name="Potamousis K."/>
            <person name="Churas C."/>
            <person name="Place M."/>
            <person name="Herschleb J."/>
            <person name="Runnheim R."/>
            <person name="Forrest D."/>
            <person name="Amos-Landgraf J."/>
            <person name="Schwartz D.C."/>
            <person name="Cheng Z."/>
            <person name="Lindblad-Toh K."/>
            <person name="Eichler E.E."/>
            <person name="Ponting C.P."/>
        </authorList>
    </citation>
    <scope>NUCLEOTIDE SEQUENCE [LARGE SCALE GENOMIC DNA]</scope>
    <source>
        <strain>C57BL/6J</strain>
    </source>
</reference>
<reference key="2">
    <citation type="journal article" date="2005" name="Science">
        <title>The transcriptional landscape of the mammalian genome.</title>
        <authorList>
            <person name="Carninci P."/>
            <person name="Kasukawa T."/>
            <person name="Katayama S."/>
            <person name="Gough J."/>
            <person name="Frith M.C."/>
            <person name="Maeda N."/>
            <person name="Oyama R."/>
            <person name="Ravasi T."/>
            <person name="Lenhard B."/>
            <person name="Wells C."/>
            <person name="Kodzius R."/>
            <person name="Shimokawa K."/>
            <person name="Bajic V.B."/>
            <person name="Brenner S.E."/>
            <person name="Batalov S."/>
            <person name="Forrest A.R."/>
            <person name="Zavolan M."/>
            <person name="Davis M.J."/>
            <person name="Wilming L.G."/>
            <person name="Aidinis V."/>
            <person name="Allen J.E."/>
            <person name="Ambesi-Impiombato A."/>
            <person name="Apweiler R."/>
            <person name="Aturaliya R.N."/>
            <person name="Bailey T.L."/>
            <person name="Bansal M."/>
            <person name="Baxter L."/>
            <person name="Beisel K.W."/>
            <person name="Bersano T."/>
            <person name="Bono H."/>
            <person name="Chalk A.M."/>
            <person name="Chiu K.P."/>
            <person name="Choudhary V."/>
            <person name="Christoffels A."/>
            <person name="Clutterbuck D.R."/>
            <person name="Crowe M.L."/>
            <person name="Dalla E."/>
            <person name="Dalrymple B.P."/>
            <person name="de Bono B."/>
            <person name="Della Gatta G."/>
            <person name="di Bernardo D."/>
            <person name="Down T."/>
            <person name="Engstrom P."/>
            <person name="Fagiolini M."/>
            <person name="Faulkner G."/>
            <person name="Fletcher C.F."/>
            <person name="Fukushima T."/>
            <person name="Furuno M."/>
            <person name="Futaki S."/>
            <person name="Gariboldi M."/>
            <person name="Georgii-Hemming P."/>
            <person name="Gingeras T.R."/>
            <person name="Gojobori T."/>
            <person name="Green R.E."/>
            <person name="Gustincich S."/>
            <person name="Harbers M."/>
            <person name="Hayashi Y."/>
            <person name="Hensch T.K."/>
            <person name="Hirokawa N."/>
            <person name="Hill D."/>
            <person name="Huminiecki L."/>
            <person name="Iacono M."/>
            <person name="Ikeo K."/>
            <person name="Iwama A."/>
            <person name="Ishikawa T."/>
            <person name="Jakt M."/>
            <person name="Kanapin A."/>
            <person name="Katoh M."/>
            <person name="Kawasawa Y."/>
            <person name="Kelso J."/>
            <person name="Kitamura H."/>
            <person name="Kitano H."/>
            <person name="Kollias G."/>
            <person name="Krishnan S.P."/>
            <person name="Kruger A."/>
            <person name="Kummerfeld S.K."/>
            <person name="Kurochkin I.V."/>
            <person name="Lareau L.F."/>
            <person name="Lazarevic D."/>
            <person name="Lipovich L."/>
            <person name="Liu J."/>
            <person name="Liuni S."/>
            <person name="McWilliam S."/>
            <person name="Madan Babu M."/>
            <person name="Madera M."/>
            <person name="Marchionni L."/>
            <person name="Matsuda H."/>
            <person name="Matsuzawa S."/>
            <person name="Miki H."/>
            <person name="Mignone F."/>
            <person name="Miyake S."/>
            <person name="Morris K."/>
            <person name="Mottagui-Tabar S."/>
            <person name="Mulder N."/>
            <person name="Nakano N."/>
            <person name="Nakauchi H."/>
            <person name="Ng P."/>
            <person name="Nilsson R."/>
            <person name="Nishiguchi S."/>
            <person name="Nishikawa S."/>
            <person name="Nori F."/>
            <person name="Ohara O."/>
            <person name="Okazaki Y."/>
            <person name="Orlando V."/>
            <person name="Pang K.C."/>
            <person name="Pavan W.J."/>
            <person name="Pavesi G."/>
            <person name="Pesole G."/>
            <person name="Petrovsky N."/>
            <person name="Piazza S."/>
            <person name="Reed J."/>
            <person name="Reid J.F."/>
            <person name="Ring B.Z."/>
            <person name="Ringwald M."/>
            <person name="Rost B."/>
            <person name="Ruan Y."/>
            <person name="Salzberg S.L."/>
            <person name="Sandelin A."/>
            <person name="Schneider C."/>
            <person name="Schoenbach C."/>
            <person name="Sekiguchi K."/>
            <person name="Semple C.A."/>
            <person name="Seno S."/>
            <person name="Sessa L."/>
            <person name="Sheng Y."/>
            <person name="Shibata Y."/>
            <person name="Shimada H."/>
            <person name="Shimada K."/>
            <person name="Silva D."/>
            <person name="Sinclair B."/>
            <person name="Sperling S."/>
            <person name="Stupka E."/>
            <person name="Sugiura K."/>
            <person name="Sultana R."/>
            <person name="Takenaka Y."/>
            <person name="Taki K."/>
            <person name="Tammoja K."/>
            <person name="Tan S.L."/>
            <person name="Tang S."/>
            <person name="Taylor M.S."/>
            <person name="Tegner J."/>
            <person name="Teichmann S.A."/>
            <person name="Ueda H.R."/>
            <person name="van Nimwegen E."/>
            <person name="Verardo R."/>
            <person name="Wei C.L."/>
            <person name="Yagi K."/>
            <person name="Yamanishi H."/>
            <person name="Zabarovsky E."/>
            <person name="Zhu S."/>
            <person name="Zimmer A."/>
            <person name="Hide W."/>
            <person name="Bult C."/>
            <person name="Grimmond S.M."/>
            <person name="Teasdale R.D."/>
            <person name="Liu E.T."/>
            <person name="Brusic V."/>
            <person name="Quackenbush J."/>
            <person name="Wahlestedt C."/>
            <person name="Mattick J.S."/>
            <person name="Hume D.A."/>
            <person name="Kai C."/>
            <person name="Sasaki D."/>
            <person name="Tomaru Y."/>
            <person name="Fukuda S."/>
            <person name="Kanamori-Katayama M."/>
            <person name="Suzuki M."/>
            <person name="Aoki J."/>
            <person name="Arakawa T."/>
            <person name="Iida J."/>
            <person name="Imamura K."/>
            <person name="Itoh M."/>
            <person name="Kato T."/>
            <person name="Kawaji H."/>
            <person name="Kawagashira N."/>
            <person name="Kawashima T."/>
            <person name="Kojima M."/>
            <person name="Kondo S."/>
            <person name="Konno H."/>
            <person name="Nakano K."/>
            <person name="Ninomiya N."/>
            <person name="Nishio T."/>
            <person name="Okada M."/>
            <person name="Plessy C."/>
            <person name="Shibata K."/>
            <person name="Shiraki T."/>
            <person name="Suzuki S."/>
            <person name="Tagami M."/>
            <person name="Waki K."/>
            <person name="Watahiki A."/>
            <person name="Okamura-Oho Y."/>
            <person name="Suzuki H."/>
            <person name="Kawai J."/>
            <person name="Hayashizaki Y."/>
        </authorList>
    </citation>
    <scope>NUCLEOTIDE SEQUENCE [LARGE SCALE MRNA] OF 1-545 (ISOFORM 1)</scope>
    <source>
        <strain>C57BL/6J</strain>
        <tissue>Testis</tissue>
    </source>
</reference>
<reference key="3">
    <citation type="journal article" date="2004" name="Genome Res.">
        <title>The status, quality, and expansion of the NIH full-length cDNA project: the Mammalian Gene Collection (MGC).</title>
        <authorList>
            <consortium name="The MGC Project Team"/>
        </authorList>
    </citation>
    <scope>NUCLEOTIDE SEQUENCE [LARGE SCALE MRNA] OF 764-1610 (ISOFORM 2)</scope>
    <source>
        <strain>C57BL/6J</strain>
        <tissue>Retina</tissue>
    </source>
</reference>
<reference key="4">
    <citation type="journal article" date="2004" name="DNA Res.">
        <title>Prediction of the coding sequences of mouse homologues of KIAA gene: IV. The complete nucleotide sequences of 500 mouse KIAA-homologous cDNAs identified by screening of terminal sequences of cDNA clones randomly sampled from size-fractionated libraries.</title>
        <authorList>
            <person name="Okazaki N."/>
            <person name="Kikuno R."/>
            <person name="Ohara R."/>
            <person name="Inamoto S."/>
            <person name="Koseki H."/>
            <person name="Hiraoka S."/>
            <person name="Saga Y."/>
            <person name="Seino S."/>
            <person name="Nishimura M."/>
            <person name="Kaisho T."/>
            <person name="Hoshino K."/>
            <person name="Kitamura H."/>
            <person name="Nagase T."/>
            <person name="Ohara O."/>
            <person name="Koga H."/>
        </authorList>
    </citation>
    <scope>NUCLEOTIDE SEQUENCE [LARGE SCALE MRNA] OF 1319-1610 (ISOFORM 1)</scope>
    <source>
        <tissue>Embryonic intestine</tissue>
    </source>
</reference>
<reference key="5">
    <citation type="journal article" date="2010" name="Cell">
        <title>A tissue-specific atlas of mouse protein phosphorylation and expression.</title>
        <authorList>
            <person name="Huttlin E.L."/>
            <person name="Jedrychowski M.P."/>
            <person name="Elias J.E."/>
            <person name="Goswami T."/>
            <person name="Rad R."/>
            <person name="Beausoleil S.A."/>
            <person name="Villen J."/>
            <person name="Haas W."/>
            <person name="Sowa M.E."/>
            <person name="Gygi S.P."/>
        </authorList>
    </citation>
    <scope>PHOSPHORYLATION [LARGE SCALE ANALYSIS] AT SER-628; SER-631; SER-836 AND SER-921</scope>
    <scope>PHOSPHORYLATION [LARGE SCALE ANALYSIS] AT SER-928 (ISOFORM 2)</scope>
    <scope>IDENTIFICATION BY MASS SPECTROMETRY [LARGE SCALE ANALYSIS]</scope>
    <source>
        <tissue>Brain</tissue>
        <tissue>Kidney</tissue>
        <tissue>Liver</tissue>
        <tissue>Pancreas</tissue>
        <tissue>Spleen</tissue>
        <tissue>Testis</tissue>
    </source>
</reference>
<reference key="6">
    <citation type="journal article" date="2014" name="Mamm. Genome">
        <title>The first mouse mutants of D14Abb1e (Fam208a) show that it is critical for early development.</title>
        <authorList>
            <person name="Harten S.K."/>
            <person name="Bruxner T.J."/>
            <person name="Bharti V."/>
            <person name="Blewitt M."/>
            <person name="Nguyen T.M."/>
            <person name="Whitelaw E."/>
            <person name="Epp T."/>
        </authorList>
    </citation>
    <scope>SUBCELLULAR LOCATION</scope>
    <scope>TISSUE SPECIFICITY</scope>
    <scope>DISRUPTION PHENOTYPE</scope>
    <scope>MUTAGENESIS OF LEU-130</scope>
</reference>
<reference key="7">
    <citation type="journal article" date="2017" name="Sci. Rep.">
        <title>The epigenetic modifier Fam208a is required to maintain epiblast cell fitness.</title>
        <authorList>
            <person name="Bhargava S."/>
            <person name="Cox B."/>
            <person name="Polydorou C."/>
            <person name="Gresakova V."/>
            <person name="Korinek V."/>
            <person name="Strnad H."/>
            <person name="Sedlacek R."/>
            <person name="Epp T.A."/>
            <person name="Chawengsaksophak K."/>
        </authorList>
    </citation>
    <scope>FUNCTION</scope>
    <scope>DEVELOPMENTAL STAGE</scope>
    <scope>MUTAGENESIS OF LEU-130</scope>
</reference>
<reference key="8">
    <citation type="journal article" date="2019" name="Exp. Cell Res.">
        <title>Fam208a orchestrates interaction protein network essential for early embryonic development and cell division.</title>
        <authorList>
            <person name="Gresakova V."/>
            <person name="Novosadova V."/>
            <person name="Prochazkova M."/>
            <person name="Bhargava S."/>
            <person name="Jenickova I."/>
            <person name="Prochazka J."/>
            <person name="Sedlacek R."/>
        </authorList>
    </citation>
    <scope>FUNCTION</scope>
    <scope>DISRUPTION PHENOTYPE</scope>
    <scope>TISSUE SPECIFICITY</scope>
    <scope>INTERACTION WITH INPP5A; EML1; SV1L; GPSM2; ITGB3BP; CNTN1; ETFA; PSMD8; S100A10; MPHOSPH8; TMEM100; ALB; PARPBP; HCFC2; NCBP1 AND SETDB1</scope>
</reference>
<dbReference type="EMBL" id="AC154327">
    <property type="status" value="NOT_ANNOTATED_CDS"/>
    <property type="molecule type" value="Genomic_DNA"/>
</dbReference>
<dbReference type="EMBL" id="AC154637">
    <property type="status" value="NOT_ANNOTATED_CDS"/>
    <property type="molecule type" value="Genomic_DNA"/>
</dbReference>
<dbReference type="EMBL" id="CAAA01054285">
    <property type="status" value="NOT_ANNOTATED_CDS"/>
    <property type="molecule type" value="Genomic_DNA"/>
</dbReference>
<dbReference type="EMBL" id="CT485787">
    <property type="status" value="NOT_ANNOTATED_CDS"/>
    <property type="molecule type" value="Genomic_DNA"/>
</dbReference>
<dbReference type="EMBL" id="AK016751">
    <property type="protein sequence ID" value="BAB30409.2"/>
    <property type="molecule type" value="mRNA"/>
</dbReference>
<dbReference type="EMBL" id="BC037390">
    <property type="status" value="NOT_ANNOTATED_CDS"/>
    <property type="molecule type" value="mRNA"/>
</dbReference>
<dbReference type="EMBL" id="AK173099">
    <property type="protein sequence ID" value="BAD32377.1"/>
    <property type="molecule type" value="mRNA"/>
</dbReference>
<dbReference type="CCDS" id="CCDS49432.1">
    <molecule id="Q69ZR9-2"/>
</dbReference>
<dbReference type="RefSeq" id="NP_001108351.1">
    <property type="nucleotide sequence ID" value="NM_001114879.1"/>
</dbReference>
<dbReference type="RefSeq" id="NP_083221.1">
    <molecule id="Q69ZR9-2"/>
    <property type="nucleotide sequence ID" value="NM_028945.3"/>
</dbReference>
<dbReference type="SMR" id="Q69ZR9"/>
<dbReference type="BioGRID" id="230071">
    <property type="interactions" value="3"/>
</dbReference>
<dbReference type="FunCoup" id="Q69ZR9">
    <property type="interactions" value="3028"/>
</dbReference>
<dbReference type="IntAct" id="Q69ZR9">
    <property type="interactions" value="1"/>
</dbReference>
<dbReference type="MINT" id="Q69ZR9"/>
<dbReference type="STRING" id="10090.ENSMUSP00000022450"/>
<dbReference type="GlyGen" id="Q69ZR9">
    <property type="glycosylation" value="2 sites, 1 O-linked glycan (2 sites)"/>
</dbReference>
<dbReference type="iPTMnet" id="Q69ZR9"/>
<dbReference type="PhosphoSitePlus" id="Q69ZR9"/>
<dbReference type="jPOST" id="Q69ZR9"/>
<dbReference type="PaxDb" id="10090-ENSMUSP00000022450"/>
<dbReference type="PeptideAtlas" id="Q69ZR9"/>
<dbReference type="ProteomicsDB" id="263251">
    <molecule id="Q69ZR9-1"/>
</dbReference>
<dbReference type="ProteomicsDB" id="263252">
    <molecule id="Q69ZR9-2"/>
</dbReference>
<dbReference type="Pumba" id="Q69ZR9"/>
<dbReference type="Antibodypedia" id="1875">
    <property type="antibodies" value="30 antibodies from 13 providers"/>
</dbReference>
<dbReference type="Ensembl" id="ENSMUST00000022450.6">
    <molecule id="Q69ZR9-2"/>
    <property type="protein sequence ID" value="ENSMUSP00000022450.5"/>
    <property type="gene ID" value="ENSMUSG00000040651.10"/>
</dbReference>
<dbReference type="GeneID" id="218850"/>
<dbReference type="KEGG" id="mmu:218850"/>
<dbReference type="UCSC" id="uc007stt.1">
    <molecule id="Q69ZR9-2"/>
    <property type="organism name" value="mouse"/>
</dbReference>
<dbReference type="UCSC" id="uc011zhv.1">
    <molecule id="Q69ZR9-1"/>
    <property type="organism name" value="mouse"/>
</dbReference>
<dbReference type="AGR" id="MGI:1921694"/>
<dbReference type="CTD" id="23272"/>
<dbReference type="MGI" id="MGI:1921694">
    <property type="gene designation" value="Tasor"/>
</dbReference>
<dbReference type="VEuPathDB" id="HostDB:ENSMUSG00000040651"/>
<dbReference type="eggNOG" id="ENOG502QUY9">
    <property type="taxonomic scope" value="Eukaryota"/>
</dbReference>
<dbReference type="GeneTree" id="ENSGT00530000063735"/>
<dbReference type="HOGENOM" id="CLU_004573_0_0_1"/>
<dbReference type="InParanoid" id="Q69ZR9"/>
<dbReference type="OMA" id="MRQKHEY"/>
<dbReference type="OrthoDB" id="57752at9989"/>
<dbReference type="PhylomeDB" id="Q69ZR9"/>
<dbReference type="TreeFam" id="TF336055"/>
<dbReference type="BioGRID-ORCS" id="218850">
    <property type="hits" value="11 hits in 77 CRISPR screens"/>
</dbReference>
<dbReference type="ChiTaRS" id="Fam208a">
    <property type="organism name" value="mouse"/>
</dbReference>
<dbReference type="PRO" id="PR:Q69ZR9"/>
<dbReference type="Proteomes" id="UP000000589">
    <property type="component" value="Chromosome 14"/>
</dbReference>
<dbReference type="RNAct" id="Q69ZR9">
    <property type="molecule type" value="protein"/>
</dbReference>
<dbReference type="Bgee" id="ENSMUSG00000040651">
    <property type="expression patterns" value="Expressed in manus and 230 other cell types or tissues"/>
</dbReference>
<dbReference type="ExpressionAtlas" id="Q69ZR9">
    <property type="expression patterns" value="baseline and differential"/>
</dbReference>
<dbReference type="GO" id="GO:0000792">
    <property type="term" value="C:heterochromatin"/>
    <property type="evidence" value="ECO:0007669"/>
    <property type="project" value="Ensembl"/>
</dbReference>
<dbReference type="GO" id="GO:0005654">
    <property type="term" value="C:nucleoplasm"/>
    <property type="evidence" value="ECO:0000304"/>
    <property type="project" value="Reactome"/>
</dbReference>
<dbReference type="GO" id="GO:0003682">
    <property type="term" value="F:chromatin binding"/>
    <property type="evidence" value="ECO:0007669"/>
    <property type="project" value="Ensembl"/>
</dbReference>
<dbReference type="GO" id="GO:0008595">
    <property type="term" value="P:anterior/posterior axis specification, embryo"/>
    <property type="evidence" value="ECO:0000315"/>
    <property type="project" value="UniProtKB"/>
</dbReference>
<dbReference type="GO" id="GO:0140719">
    <property type="term" value="P:constitutive heterochromatin formation"/>
    <property type="evidence" value="ECO:0000250"/>
    <property type="project" value="UniProtKB"/>
</dbReference>
<dbReference type="GO" id="GO:0060809">
    <property type="term" value="P:mesodermal to mesenchymal transition involved in gastrulation"/>
    <property type="evidence" value="ECO:0000315"/>
    <property type="project" value="UniProtKB"/>
</dbReference>
<dbReference type="GO" id="GO:0097355">
    <property type="term" value="P:protein localization to heterochromatin"/>
    <property type="evidence" value="ECO:0000250"/>
    <property type="project" value="UniProtKB"/>
</dbReference>
<dbReference type="GO" id="GO:0141005">
    <property type="term" value="P:transposable element silencing by heterochromatin formation"/>
    <property type="evidence" value="ECO:0007669"/>
    <property type="project" value="Ensembl"/>
</dbReference>
<dbReference type="CDD" id="cd22569">
    <property type="entry name" value="TASOR_PBD"/>
    <property type="match status" value="1"/>
</dbReference>
<dbReference type="Gene3D" id="3.90.228.10">
    <property type="match status" value="1"/>
</dbReference>
<dbReference type="InterPro" id="IPR056242">
    <property type="entry name" value="PIN_TASOR"/>
</dbReference>
<dbReference type="InterPro" id="IPR046432">
    <property type="entry name" value="TASOR"/>
</dbReference>
<dbReference type="InterPro" id="IPR056243">
    <property type="entry name" value="TASOR_ab_dom"/>
</dbReference>
<dbReference type="InterPro" id="IPR022188">
    <property type="entry name" value="TASOR_DUF3715"/>
</dbReference>
<dbReference type="PANTHER" id="PTHR16207:SF1">
    <property type="entry name" value="PROTEIN TASOR"/>
    <property type="match status" value="1"/>
</dbReference>
<dbReference type="PANTHER" id="PTHR16207">
    <property type="entry name" value="SET DOMAIN-CONTAINING PROTEIN"/>
    <property type="match status" value="1"/>
</dbReference>
<dbReference type="Pfam" id="PF12509">
    <property type="entry name" value="DUF3715"/>
    <property type="match status" value="1"/>
</dbReference>
<dbReference type="Pfam" id="PF24630">
    <property type="entry name" value="PIN_TASOR"/>
    <property type="match status" value="1"/>
</dbReference>
<dbReference type="Pfam" id="PF23314">
    <property type="entry name" value="TASOR_alpha-beta"/>
    <property type="match status" value="1"/>
</dbReference>